<proteinExistence type="evidence at protein level"/>
<protein>
    <recommendedName>
        <fullName>Chitinase-like protein 1</fullName>
        <shortName>AtCTL1</shortName>
    </recommendedName>
    <alternativeName>
        <fullName>Protein ANION ALTERED ROOT MORPHOLOGY</fullName>
    </alternativeName>
    <alternativeName>
        <fullName>Protein ECTOPIC DEPOSITION OF LIGNIN IN PITH 1</fullName>
    </alternativeName>
    <alternativeName>
        <fullName>Protein ECTOPIC ROOT HAIR 2</fullName>
    </alternativeName>
    <alternativeName>
        <fullName>Protein POM-POM1</fullName>
    </alternativeName>
    <alternativeName>
        <fullName>Protein SENSITIVE TO HOT TEMPERATURES 2</fullName>
    </alternativeName>
</protein>
<name>CTL1_ARATH</name>
<gene>
    <name type="primary">CTL1</name>
    <name type="synonym">ARM</name>
    <name type="synonym">ELP1</name>
    <name type="synonym">ERH2</name>
    <name type="synonym">HOT2</name>
    <name type="synonym">POM1</name>
    <name type="ordered locus">At1g05850</name>
    <name type="ORF">T20M3.12</name>
</gene>
<sequence length="321" mass="35579">MVTIRSGSIVILVLLAVSFLALVANGEDKTIKVKKVRGNKVCTQGWECSWWSKYCCNQTISDYFQVYQFEQLFSKRNTPIAHAVGFWDYQSFITAAALFEPLGFGTTGGKLMGQKEMAAFLGHVASKTSCGYGVATGGPLAWGLCYNREMSPMQSYCDESWKFKYPCSPGAEYYGRGALPIYWNFNYGAAGEALKADLLNHPEYIEQNATLAFQAAIWRWMTPIKRAQPSAHDIFVGNWKPTKNDTLSKRGPTFGSTMNVLYGEYTCGQGSIDPMNNIISHYLYFLDLMGIGREDAGPNDELSCAEQKPFNPSTVPSSSSS</sequence>
<evidence type="ECO:0000250" key="1"/>
<evidence type="ECO:0000255" key="2"/>
<evidence type="ECO:0000256" key="3">
    <source>
        <dbReference type="SAM" id="MobiDB-lite"/>
    </source>
</evidence>
<evidence type="ECO:0000269" key="4">
    <source>
    </source>
</evidence>
<evidence type="ECO:0000269" key="5">
    <source>
    </source>
</evidence>
<evidence type="ECO:0000269" key="6">
    <source>
    </source>
</evidence>
<evidence type="ECO:0000269" key="7">
    <source>
    </source>
</evidence>
<evidence type="ECO:0000269" key="8">
    <source>
    </source>
</evidence>
<evidence type="ECO:0000269" key="9">
    <source>
    </source>
</evidence>
<evidence type="ECO:0000269" key="10">
    <source>
    </source>
</evidence>
<evidence type="ECO:0000269" key="11">
    <source>
    </source>
</evidence>
<evidence type="ECO:0000269" key="12">
    <source>
    </source>
</evidence>
<evidence type="ECO:0000269" key="13">
    <source>
    </source>
</evidence>
<evidence type="ECO:0000305" key="14"/>
<feature type="signal peptide" evidence="2">
    <location>
        <begin position="1"/>
        <end position="26"/>
    </location>
</feature>
<feature type="chain" id="PRO_0000394283" description="Chitinase-like protein 1">
    <location>
        <begin position="27"/>
        <end position="321"/>
    </location>
</feature>
<feature type="region of interest" description="Disordered" evidence="3">
    <location>
        <begin position="297"/>
        <end position="321"/>
    </location>
</feature>
<feature type="compositionally biased region" description="Polar residues" evidence="3">
    <location>
        <begin position="310"/>
        <end position="321"/>
    </location>
</feature>
<feature type="glycosylation site" description="N-linked (GlcNAc...) asparagine" evidence="2">
    <location>
        <position position="57"/>
    </location>
</feature>
<feature type="glycosylation site" description="N-linked (GlcNAc...) asparagine" evidence="2">
    <location>
        <position position="208"/>
    </location>
</feature>
<feature type="glycosylation site" description="N-linked (GlcNAc...) asparagine" evidence="2">
    <location>
        <position position="244"/>
    </location>
</feature>
<feature type="disulfide bond" evidence="1">
    <location>
        <begin position="42"/>
        <end position="55"/>
    </location>
</feature>
<feature type="disulfide bond" evidence="1">
    <location>
        <begin position="157"/>
        <end position="167"/>
    </location>
</feature>
<feature type="disulfide bond" evidence="1">
    <location>
        <begin position="267"/>
        <end position="304"/>
    </location>
</feature>
<feature type="mutagenesis site" description="In arm; abnormal root architecture in responses to high nitrate." evidence="10">
    <original>S</original>
    <variation>I</variation>
    <location>
        <position position="168"/>
    </location>
</feature>
<feature type="mutagenesis site" description="In hot2-1; reduced tolerance to abiotic stresses such as salt, drought and heat." evidence="9">
    <original>G</original>
    <variation>R</variation>
    <location>
        <position position="188"/>
    </location>
</feature>
<feature type="sequence conflict" description="In Ref. 6; CAA81011." evidence="14" ref="6">
    <original>E</original>
    <variation>A</variation>
    <location>
        <position position="149"/>
    </location>
</feature>
<feature type="sequence conflict" description="In Ref. 6; CAA81011." evidence="14" ref="6">
    <original>M</original>
    <variation>L</variation>
    <location>
        <position position="153"/>
    </location>
</feature>
<feature type="sequence conflict" description="In Ref. 5; BAH30273." evidence="14" ref="5">
    <original>N</original>
    <variation>K</variation>
    <location>
        <position position="208"/>
    </location>
</feature>
<comment type="function">
    <text evidence="4 5 6 7 8 9 10 11 12 13">No chitinase activity. Essential for normal plant growth and development. Regulates cell expansion extent and differentiation at least in roots and hypocotyls. Prevents lignin accumulation in the pith. May modulate ethylene-mediated regulation during development. Probably required to establish thermotolerance acclimation. Plays a role for controlled anisotropic cell expansion in the regulation of waving during root gravitropism and thigmotropism. Involved in the root system architecture adaptation to multiple environmental conditions such as nitrate. Contributes to salt tolerance and possibly to drought by preventing the overaccumulation of sodium ions.</text>
</comment>
<comment type="subcellular location">
    <subcellularLocation>
        <location evidence="14">Secreted</location>
    </subcellularLocation>
</comment>
<comment type="tissue specificity">
    <text evidence="6 10 11">Mostly expressed in seedlings shoots and roots, stems, and flowers, and, to a lower extent, in flowers, mature leaves and roots.</text>
</comment>
<comment type="induction">
    <text evidence="6">Repressed after wounding or treatment with ethylene.</text>
</comment>
<comment type="disruption phenotype">
    <text evidence="4 5 6 7 8 9 12 13">Abnormal root expansion with ectopic root-hairs, reduced growth, excess lateral stems and smaller leaves. Loss of regulation of the extent of root epidermal and cortex cell expansion. Ectopic deposition of lignin and aberrant shapes of cells with incomplete cell walls in the pith of inflorescence stems. Exaggerated hook curvature, reduced length and increased diameter of hypocotyls in dark-grown seedlings, and reduced root length and increased number of root hairs in light-grown seedlings. Increased ethylene production. Exhibit also thermotolerance defect. Lacks the lefthanded root epidermal cell file rotation (CFR) and enhanced root skewing in response to low doses of propyzamide. Aberrant reduced tolerance to salt and drought stresses, with accumulated of sodium ions.</text>
</comment>
<comment type="similarity">
    <text evidence="14">Belongs to the glycosyl hydrolase 19 family.</text>
</comment>
<reference key="1">
    <citation type="journal article" date="2002" name="Plant Cell">
        <title>Mutation of a chitinase-like gene causes ectopic deposition of lignin, aberrant cell shapes, and overproduction of ethylene.</title>
        <authorList>
            <person name="Zhong R."/>
            <person name="Kays S.J."/>
            <person name="Schroeder B.P."/>
            <person name="Ye Z.H."/>
        </authorList>
    </citation>
    <scope>NUCLEOTIDE SEQUENCE [GENOMIC DNA / MRNA]</scope>
    <scope>FUNCTION</scope>
    <scope>DISRUPTION PHENOTYPE</scope>
    <scope>TISSUE SPECIFICITY</scope>
    <scope>INDUCTION BY WOUNDING AND ETHYLENE</scope>
</reference>
<reference key="2">
    <citation type="journal article" date="2000" name="Nature">
        <title>Sequence and analysis of chromosome 1 of the plant Arabidopsis thaliana.</title>
        <authorList>
            <person name="Theologis A."/>
            <person name="Ecker J.R."/>
            <person name="Palm C.J."/>
            <person name="Federspiel N.A."/>
            <person name="Kaul S."/>
            <person name="White O."/>
            <person name="Alonso J."/>
            <person name="Altafi H."/>
            <person name="Araujo R."/>
            <person name="Bowman C.L."/>
            <person name="Brooks S.Y."/>
            <person name="Buehler E."/>
            <person name="Chan A."/>
            <person name="Chao Q."/>
            <person name="Chen H."/>
            <person name="Cheuk R.F."/>
            <person name="Chin C.W."/>
            <person name="Chung M.K."/>
            <person name="Conn L."/>
            <person name="Conway A.B."/>
            <person name="Conway A.R."/>
            <person name="Creasy T.H."/>
            <person name="Dewar K."/>
            <person name="Dunn P."/>
            <person name="Etgu P."/>
            <person name="Feldblyum T.V."/>
            <person name="Feng J.-D."/>
            <person name="Fong B."/>
            <person name="Fujii C.Y."/>
            <person name="Gill J.E."/>
            <person name="Goldsmith A.D."/>
            <person name="Haas B."/>
            <person name="Hansen N.F."/>
            <person name="Hughes B."/>
            <person name="Huizar L."/>
            <person name="Hunter J.L."/>
            <person name="Jenkins J."/>
            <person name="Johnson-Hopson C."/>
            <person name="Khan S."/>
            <person name="Khaykin E."/>
            <person name="Kim C.J."/>
            <person name="Koo H.L."/>
            <person name="Kremenetskaia I."/>
            <person name="Kurtz D.B."/>
            <person name="Kwan A."/>
            <person name="Lam B."/>
            <person name="Langin-Hooper S."/>
            <person name="Lee A."/>
            <person name="Lee J.M."/>
            <person name="Lenz C.A."/>
            <person name="Li J.H."/>
            <person name="Li Y.-P."/>
            <person name="Lin X."/>
            <person name="Liu S.X."/>
            <person name="Liu Z.A."/>
            <person name="Luros J.S."/>
            <person name="Maiti R."/>
            <person name="Marziali A."/>
            <person name="Militscher J."/>
            <person name="Miranda M."/>
            <person name="Nguyen M."/>
            <person name="Nierman W.C."/>
            <person name="Osborne B.I."/>
            <person name="Pai G."/>
            <person name="Peterson J."/>
            <person name="Pham P.K."/>
            <person name="Rizzo M."/>
            <person name="Rooney T."/>
            <person name="Rowley D."/>
            <person name="Sakano H."/>
            <person name="Salzberg S.L."/>
            <person name="Schwartz J.R."/>
            <person name="Shinn P."/>
            <person name="Southwick A.M."/>
            <person name="Sun H."/>
            <person name="Tallon L.J."/>
            <person name="Tambunga G."/>
            <person name="Toriumi M.J."/>
            <person name="Town C.D."/>
            <person name="Utterback T."/>
            <person name="Van Aken S."/>
            <person name="Vaysberg M."/>
            <person name="Vysotskaia V.S."/>
            <person name="Walker M."/>
            <person name="Wu D."/>
            <person name="Yu G."/>
            <person name="Fraser C.M."/>
            <person name="Venter J.C."/>
            <person name="Davis R.W."/>
        </authorList>
    </citation>
    <scope>NUCLEOTIDE SEQUENCE [LARGE SCALE GENOMIC DNA]</scope>
    <source>
        <strain>cv. Columbia</strain>
    </source>
</reference>
<reference key="3">
    <citation type="journal article" date="2017" name="Plant J.">
        <title>Araport11: a complete reannotation of the Arabidopsis thaliana reference genome.</title>
        <authorList>
            <person name="Cheng C.Y."/>
            <person name="Krishnakumar V."/>
            <person name="Chan A.P."/>
            <person name="Thibaud-Nissen F."/>
            <person name="Schobel S."/>
            <person name="Town C.D."/>
        </authorList>
    </citation>
    <scope>GENOME REANNOTATION</scope>
    <source>
        <strain>cv. Columbia</strain>
    </source>
</reference>
<reference key="4">
    <citation type="journal article" date="2003" name="Science">
        <title>Empirical analysis of transcriptional activity in the Arabidopsis genome.</title>
        <authorList>
            <person name="Yamada K."/>
            <person name="Lim J."/>
            <person name="Dale J.M."/>
            <person name="Chen H."/>
            <person name="Shinn P."/>
            <person name="Palm C.J."/>
            <person name="Southwick A.M."/>
            <person name="Wu H.C."/>
            <person name="Kim C.J."/>
            <person name="Nguyen M."/>
            <person name="Pham P.K."/>
            <person name="Cheuk R.F."/>
            <person name="Karlin-Newmann G."/>
            <person name="Liu S.X."/>
            <person name="Lam B."/>
            <person name="Sakano H."/>
            <person name="Wu T."/>
            <person name="Yu G."/>
            <person name="Miranda M."/>
            <person name="Quach H.L."/>
            <person name="Tripp M."/>
            <person name="Chang C.H."/>
            <person name="Lee J.M."/>
            <person name="Toriumi M.J."/>
            <person name="Chan M.M."/>
            <person name="Tang C.C."/>
            <person name="Onodera C.S."/>
            <person name="Deng J.M."/>
            <person name="Akiyama K."/>
            <person name="Ansari Y."/>
            <person name="Arakawa T."/>
            <person name="Banh J."/>
            <person name="Banno F."/>
            <person name="Bowser L."/>
            <person name="Brooks S.Y."/>
            <person name="Carninci P."/>
            <person name="Chao Q."/>
            <person name="Choy N."/>
            <person name="Enju A."/>
            <person name="Goldsmith A.D."/>
            <person name="Gurjal M."/>
            <person name="Hansen N.F."/>
            <person name="Hayashizaki Y."/>
            <person name="Johnson-Hopson C."/>
            <person name="Hsuan V.W."/>
            <person name="Iida K."/>
            <person name="Karnes M."/>
            <person name="Khan S."/>
            <person name="Koesema E."/>
            <person name="Ishida J."/>
            <person name="Jiang P.X."/>
            <person name="Jones T."/>
            <person name="Kawai J."/>
            <person name="Kamiya A."/>
            <person name="Meyers C."/>
            <person name="Nakajima M."/>
            <person name="Narusaka M."/>
            <person name="Seki M."/>
            <person name="Sakurai T."/>
            <person name="Satou M."/>
            <person name="Tamse R."/>
            <person name="Vaysberg M."/>
            <person name="Wallender E.K."/>
            <person name="Wong C."/>
            <person name="Yamamura Y."/>
            <person name="Yuan S."/>
            <person name="Shinozaki K."/>
            <person name="Davis R.W."/>
            <person name="Theologis A."/>
            <person name="Ecker J.R."/>
        </authorList>
    </citation>
    <scope>NUCLEOTIDE SEQUENCE [LARGE SCALE MRNA]</scope>
    <source>
        <strain>cv. Columbia</strain>
    </source>
</reference>
<reference key="5">
    <citation type="submission" date="2009-03" db="EMBL/GenBank/DDBJ databases">
        <title>ORF cloning and analysis of Arabidopsis transcription factor genes.</title>
        <authorList>
            <person name="Fujita M."/>
            <person name="Mizukado S."/>
            <person name="Seki M."/>
            <person name="Shinozaki K."/>
            <person name="Mitsuda N."/>
            <person name="Takiguchi Y."/>
            <person name="Takagi M."/>
        </authorList>
    </citation>
    <scope>NUCLEOTIDE SEQUENCE [LARGE SCALE MRNA]</scope>
</reference>
<reference key="6">
    <citation type="submission" date="1993-08" db="EMBL/GenBank/DDBJ databases">
        <title>The Arabidopsis thaliana transcribed genome: the GDR cDNA program.</title>
        <authorList>
            <person name="Hofte H."/>
        </authorList>
    </citation>
    <scope>NUCLEOTIDE SEQUENCE [LARGE SCALE MRNA] OF 38-166</scope>
    <source>
        <strain>cv. Columbia</strain>
        <tissue>Seedling</tissue>
    </source>
</reference>
<reference key="7">
    <citation type="journal article" date="1995" name="Development">
        <title>Conditional root expansion mutants of Arabidopsis.</title>
        <authorList>
            <person name="Hauser M.-T."/>
            <person name="Morikami A."/>
            <person name="Benfey P.N."/>
        </authorList>
    </citation>
    <scope>FUNCTION</scope>
    <scope>DISRUPTION PHENOTYPE</scope>
</reference>
<reference key="8">
    <citation type="journal article" date="1997" name="Development">
        <title>Structural and genetic analysis of epidermal cell differentiation in Arabidopsis primary roots.</title>
        <authorList>
            <person name="Schneider K."/>
            <person name="Wells B."/>
            <person name="Dolan L."/>
            <person name="Roberts K."/>
        </authorList>
    </citation>
    <scope>FUNCTION</scope>
    <scope>DISRUPTION PHENOTYPE</scope>
</reference>
<reference key="9">
    <citation type="journal article" date="2000" name="Proc. Natl. Acad. Sci. U.S.A.">
        <title>Mutants of Arabidopsis thaliana defective in the acquisition of tolerance to high temperature stress.</title>
        <authorList>
            <person name="Hong S.-W."/>
            <person name="Vierling E."/>
        </authorList>
    </citation>
    <scope>FUNCTION</scope>
    <scope>DISRUPTION PHENOTYPE</scope>
</reference>
<reference key="10">
    <citation type="journal article" date="2000" name="Plant Physiol.">
        <title>Ectopic deposition of lignin in the pith of stems of two Arabidopsis mutants.</title>
        <authorList>
            <person name="Zhong R."/>
            <person name="Ripperger A."/>
            <person name="Ye Z.-H."/>
        </authorList>
    </citation>
    <scope>FUNCTION</scope>
    <scope>DISRUPTION PHENOTYPE</scope>
</reference>
<reference key="11">
    <citation type="journal article" date="2003" name="Plant Physiol.">
        <title>Arabidopsis hot mutants define multiple functions required for acclimation to high temperatures.</title>
        <authorList>
            <person name="Hong S.-W."/>
            <person name="Lee U."/>
            <person name="Vierling E."/>
        </authorList>
    </citation>
    <scope>FUNCTION</scope>
    <scope>DISRUPTION PHENOTYPE</scope>
</reference>
<reference key="12">
    <citation type="journal article" date="2005" name="Plant Physiol.">
        <title>Loss-of-function mutations of ROOT HAIR DEFECTIVE3 suppress root waving, skewing, and epidermal cell file rotation in Arabidopsis.</title>
        <authorList>
            <person name="Yuen C.Y."/>
            <person name="Sedbrook J.C."/>
            <person name="Perrin R.M."/>
            <person name="Carroll K.L."/>
            <person name="Masson P.H."/>
        </authorList>
    </citation>
    <scope>FUNCTION</scope>
    <scope>DISRUPTION PHENOTYPE</scope>
</reference>
<reference key="13">
    <citation type="journal article" date="2007" name="Plant J.">
        <title>Arabidopsis hot2 encodes an endochitinase-like protein that is essential for tolerance to heat, salt and drought stresses.</title>
        <authorList>
            <person name="Kwon Y."/>
            <person name="Kim S.-H."/>
            <person name="Jung M.-S."/>
            <person name="Kim M.-S."/>
            <person name="Oh J.-E."/>
            <person name="Ju H.-W."/>
            <person name="Kim K.-I."/>
            <person name="Vierling E."/>
            <person name="Lee H."/>
            <person name="Hong S.-W."/>
        </authorList>
    </citation>
    <scope>FUNCTION</scope>
    <scope>MUTAGENESIS OF GLY-188</scope>
    <scope>DISRUPTION PHENOTYPE</scope>
</reference>
<reference key="14">
    <citation type="journal article" date="2010" name="Plant Physiol.">
        <title>Chitinase-like protein CTL1 plays a role in altering root system architecture in response to multiple environmental conditions.</title>
        <authorList>
            <person name="Hermans C."/>
            <person name="Porco S."/>
            <person name="Verbruggen N."/>
            <person name="Bush D.R."/>
        </authorList>
    </citation>
    <scope>FUNCTION</scope>
    <scope>MUTAGENESIS OF SER-168</scope>
    <scope>TISSUE SPECIFICITY</scope>
</reference>
<reference key="15">
    <citation type="journal article" date="2010" name="J. Plant Physiol.">
        <title>Mutation of the chitinase-like protein-encoding AtCTL2 gene enhances lignin accumulation in dark-grown Arabidopsis seedlings.</title>
        <authorList>
            <person name="Hossain M.A."/>
            <person name="Noh H.N."/>
            <person name="Kim K.I."/>
            <person name="Koh E.J."/>
            <person name="Wi S.G."/>
            <person name="Bae H.J."/>
            <person name="Lee H."/>
            <person name="Hong S.W."/>
        </authorList>
    </citation>
    <scope>FUNCTION</scope>
    <scope>TISSUE SPECIFICITY</scope>
</reference>
<accession>Q9MA41</accession>
<accession>C0SUT2</accession>
<accession>Q42042</accession>
<keyword id="KW-0217">Developmental protein</keyword>
<keyword id="KW-1015">Disulfide bond</keyword>
<keyword id="KW-0936">Ethylene signaling pathway</keyword>
<keyword id="KW-0325">Glycoprotein</keyword>
<keyword id="KW-1185">Reference proteome</keyword>
<keyword id="KW-0964">Secreted</keyword>
<keyword id="KW-0732">Signal</keyword>
<dbReference type="EMBL" id="AF422178">
    <property type="protein sequence ID" value="AAL37736.1"/>
    <property type="molecule type" value="mRNA"/>
</dbReference>
<dbReference type="EMBL" id="AF422179">
    <property type="protein sequence ID" value="AAL37737.1"/>
    <property type="molecule type" value="Genomic_DNA"/>
</dbReference>
<dbReference type="EMBL" id="AC009999">
    <property type="protein sequence ID" value="AAF29391.1"/>
    <property type="molecule type" value="Genomic_DNA"/>
</dbReference>
<dbReference type="EMBL" id="CP002684">
    <property type="protein sequence ID" value="AEE27904.1"/>
    <property type="molecule type" value="Genomic_DNA"/>
</dbReference>
<dbReference type="EMBL" id="CP002684">
    <property type="protein sequence ID" value="ANM59031.1"/>
    <property type="molecule type" value="Genomic_DNA"/>
</dbReference>
<dbReference type="EMBL" id="AF332458">
    <property type="protein sequence ID" value="AAG48821.1"/>
    <property type="molecule type" value="mRNA"/>
</dbReference>
<dbReference type="EMBL" id="AY034935">
    <property type="protein sequence ID" value="AAK59442.1"/>
    <property type="molecule type" value="mRNA"/>
</dbReference>
<dbReference type="EMBL" id="AY113925">
    <property type="protein sequence ID" value="AAM44973.1"/>
    <property type="molecule type" value="mRNA"/>
</dbReference>
<dbReference type="EMBL" id="AB493435">
    <property type="protein sequence ID" value="BAH30273.1"/>
    <property type="molecule type" value="mRNA"/>
</dbReference>
<dbReference type="EMBL" id="Z25683">
    <property type="protein sequence ID" value="CAA81011.1"/>
    <property type="molecule type" value="mRNA"/>
</dbReference>
<dbReference type="PIR" id="C86193">
    <property type="entry name" value="C86193"/>
</dbReference>
<dbReference type="RefSeq" id="NP_001321426.1">
    <property type="nucleotide sequence ID" value="NM_001331589.1"/>
</dbReference>
<dbReference type="RefSeq" id="NP_172076.1">
    <property type="nucleotide sequence ID" value="NM_100466.5"/>
</dbReference>
<dbReference type="SMR" id="Q9MA41"/>
<dbReference type="FunCoup" id="Q9MA41">
    <property type="interactions" value="64"/>
</dbReference>
<dbReference type="STRING" id="3702.Q9MA41"/>
<dbReference type="CAZy" id="GH19">
    <property type="family name" value="Glycoside Hydrolase Family 19"/>
</dbReference>
<dbReference type="GlyCosmos" id="Q9MA41">
    <property type="glycosylation" value="3 sites, No reported glycans"/>
</dbReference>
<dbReference type="GlyGen" id="Q9MA41">
    <property type="glycosylation" value="3 sites"/>
</dbReference>
<dbReference type="PaxDb" id="3702-AT1G05850.1"/>
<dbReference type="ProteomicsDB" id="220318"/>
<dbReference type="EnsemblPlants" id="AT1G05850.1">
    <property type="protein sequence ID" value="AT1G05850.1"/>
    <property type="gene ID" value="AT1G05850"/>
</dbReference>
<dbReference type="EnsemblPlants" id="AT1G05850.2">
    <property type="protein sequence ID" value="AT1G05850.2"/>
    <property type="gene ID" value="AT1G05850"/>
</dbReference>
<dbReference type="GeneID" id="837095"/>
<dbReference type="Gramene" id="AT1G05850.1">
    <property type="protein sequence ID" value="AT1G05850.1"/>
    <property type="gene ID" value="AT1G05850"/>
</dbReference>
<dbReference type="Gramene" id="AT1G05850.2">
    <property type="protein sequence ID" value="AT1G05850.2"/>
    <property type="gene ID" value="AT1G05850"/>
</dbReference>
<dbReference type="KEGG" id="ath:AT1G05850"/>
<dbReference type="Araport" id="AT1G05850"/>
<dbReference type="TAIR" id="AT1G05850">
    <property type="gene designation" value="POM1"/>
</dbReference>
<dbReference type="eggNOG" id="KOG4742">
    <property type="taxonomic scope" value="Eukaryota"/>
</dbReference>
<dbReference type="HOGENOM" id="CLU_045506_2_0_1"/>
<dbReference type="InParanoid" id="Q9MA41"/>
<dbReference type="OMA" id="ECSWWSK"/>
<dbReference type="PhylomeDB" id="Q9MA41"/>
<dbReference type="PRO" id="PR:Q9MA41"/>
<dbReference type="Proteomes" id="UP000006548">
    <property type="component" value="Chromosome 1"/>
</dbReference>
<dbReference type="ExpressionAtlas" id="Q9MA41">
    <property type="expression patterns" value="baseline and differential"/>
</dbReference>
<dbReference type="GO" id="GO:0048046">
    <property type="term" value="C:apoplast"/>
    <property type="evidence" value="ECO:0000314"/>
    <property type="project" value="TAIR"/>
</dbReference>
<dbReference type="GO" id="GO:0005794">
    <property type="term" value="C:Golgi apparatus"/>
    <property type="evidence" value="ECO:0000314"/>
    <property type="project" value="TAIR"/>
</dbReference>
<dbReference type="GO" id="GO:0030247">
    <property type="term" value="F:polysaccharide binding"/>
    <property type="evidence" value="ECO:0000314"/>
    <property type="project" value="TAIR"/>
</dbReference>
<dbReference type="GO" id="GO:0001708">
    <property type="term" value="P:cell fate specification"/>
    <property type="evidence" value="ECO:0000315"/>
    <property type="project" value="TAIR"/>
</dbReference>
<dbReference type="GO" id="GO:0016998">
    <property type="term" value="P:cell wall macromolecule catabolic process"/>
    <property type="evidence" value="ECO:0007669"/>
    <property type="project" value="InterPro"/>
</dbReference>
<dbReference type="GO" id="GO:0030244">
    <property type="term" value="P:cellulose biosynthetic process"/>
    <property type="evidence" value="ECO:0000315"/>
    <property type="project" value="TAIR"/>
</dbReference>
<dbReference type="GO" id="GO:0006032">
    <property type="term" value="P:chitin catabolic process"/>
    <property type="evidence" value="ECO:0007669"/>
    <property type="project" value="InterPro"/>
</dbReference>
<dbReference type="GO" id="GO:0009873">
    <property type="term" value="P:ethylene-activated signaling pathway"/>
    <property type="evidence" value="ECO:0007669"/>
    <property type="project" value="UniProtKB-KW"/>
</dbReference>
<dbReference type="GO" id="GO:0009825">
    <property type="term" value="P:multidimensional cell growth"/>
    <property type="evidence" value="ECO:0000315"/>
    <property type="project" value="TAIR"/>
</dbReference>
<dbReference type="GO" id="GO:0010337">
    <property type="term" value="P:regulation of salicylic acid metabolic process"/>
    <property type="evidence" value="ECO:0000315"/>
    <property type="project" value="TAIR"/>
</dbReference>
<dbReference type="GO" id="GO:0009735">
    <property type="term" value="P:response to cytokinin"/>
    <property type="evidence" value="ECO:0000315"/>
    <property type="project" value="TAIR"/>
</dbReference>
<dbReference type="GO" id="GO:0009408">
    <property type="term" value="P:response to heat"/>
    <property type="evidence" value="ECO:0000315"/>
    <property type="project" value="TAIR"/>
</dbReference>
<dbReference type="GO" id="GO:0010167">
    <property type="term" value="P:response to nitrate"/>
    <property type="evidence" value="ECO:0000315"/>
    <property type="project" value="UniProtKB"/>
</dbReference>
<dbReference type="GO" id="GO:0009651">
    <property type="term" value="P:response to salt stress"/>
    <property type="evidence" value="ECO:0000315"/>
    <property type="project" value="TAIR"/>
</dbReference>
<dbReference type="GO" id="GO:0009414">
    <property type="term" value="P:response to water deprivation"/>
    <property type="evidence" value="ECO:0000315"/>
    <property type="project" value="TAIR"/>
</dbReference>
<dbReference type="GO" id="GO:0010053">
    <property type="term" value="P:root epidermal cell differentiation"/>
    <property type="evidence" value="ECO:0000315"/>
    <property type="project" value="TAIR"/>
</dbReference>
<dbReference type="CDD" id="cd00325">
    <property type="entry name" value="chitinase_GH19"/>
    <property type="match status" value="1"/>
</dbReference>
<dbReference type="FunFam" id="3.30.20.10:FF:000001">
    <property type="entry name" value="Endochitinase (Chitinase)"/>
    <property type="match status" value="1"/>
</dbReference>
<dbReference type="Gene3D" id="1.10.530.10">
    <property type="match status" value="1"/>
</dbReference>
<dbReference type="Gene3D" id="3.30.20.10">
    <property type="entry name" value="Endochitinase, domain 2"/>
    <property type="match status" value="1"/>
</dbReference>
<dbReference type="InterPro" id="IPR016283">
    <property type="entry name" value="Glyco_hydro_19"/>
</dbReference>
<dbReference type="InterPro" id="IPR000726">
    <property type="entry name" value="Glyco_hydro_19_cat"/>
</dbReference>
<dbReference type="InterPro" id="IPR023346">
    <property type="entry name" value="Lysozyme-like_dom_sf"/>
</dbReference>
<dbReference type="PANTHER" id="PTHR22595:SF208">
    <property type="entry name" value="CHITINASE-LIKE PROTEIN 1"/>
    <property type="match status" value="1"/>
</dbReference>
<dbReference type="PANTHER" id="PTHR22595">
    <property type="entry name" value="CHITINASE-RELATED"/>
    <property type="match status" value="1"/>
</dbReference>
<dbReference type="Pfam" id="PF00182">
    <property type="entry name" value="Glyco_hydro_19"/>
    <property type="match status" value="1"/>
</dbReference>
<dbReference type="PIRSF" id="PIRSF001060">
    <property type="entry name" value="Endochitinase"/>
    <property type="match status" value="1"/>
</dbReference>
<dbReference type="SUPFAM" id="SSF53955">
    <property type="entry name" value="Lysozyme-like"/>
    <property type="match status" value="1"/>
</dbReference>
<organism>
    <name type="scientific">Arabidopsis thaliana</name>
    <name type="common">Mouse-ear cress</name>
    <dbReference type="NCBI Taxonomy" id="3702"/>
    <lineage>
        <taxon>Eukaryota</taxon>
        <taxon>Viridiplantae</taxon>
        <taxon>Streptophyta</taxon>
        <taxon>Embryophyta</taxon>
        <taxon>Tracheophyta</taxon>
        <taxon>Spermatophyta</taxon>
        <taxon>Magnoliopsida</taxon>
        <taxon>eudicotyledons</taxon>
        <taxon>Gunneridae</taxon>
        <taxon>Pentapetalae</taxon>
        <taxon>rosids</taxon>
        <taxon>malvids</taxon>
        <taxon>Brassicales</taxon>
        <taxon>Brassicaceae</taxon>
        <taxon>Camelineae</taxon>
        <taxon>Arabidopsis</taxon>
    </lineage>
</organism>